<gene>
    <name evidence="1" type="primary">carA</name>
    <name type="ordered locus">LI0990</name>
</gene>
<comment type="function">
    <text evidence="1">Small subunit of the glutamine-dependent carbamoyl phosphate synthetase (CPSase). CPSase catalyzes the formation of carbamoyl phosphate from the ammonia moiety of glutamine, carbonate, and phosphate donated by ATP, constituting the first step of 2 biosynthetic pathways, one leading to arginine and/or urea and the other to pyrimidine nucleotides. The small subunit (glutamine amidotransferase) binds and cleaves glutamine to supply the large subunit with the substrate ammonia.</text>
</comment>
<comment type="catalytic activity">
    <reaction evidence="1">
        <text>hydrogencarbonate + L-glutamine + 2 ATP + H2O = carbamoyl phosphate + L-glutamate + 2 ADP + phosphate + 2 H(+)</text>
        <dbReference type="Rhea" id="RHEA:18633"/>
        <dbReference type="ChEBI" id="CHEBI:15377"/>
        <dbReference type="ChEBI" id="CHEBI:15378"/>
        <dbReference type="ChEBI" id="CHEBI:17544"/>
        <dbReference type="ChEBI" id="CHEBI:29985"/>
        <dbReference type="ChEBI" id="CHEBI:30616"/>
        <dbReference type="ChEBI" id="CHEBI:43474"/>
        <dbReference type="ChEBI" id="CHEBI:58228"/>
        <dbReference type="ChEBI" id="CHEBI:58359"/>
        <dbReference type="ChEBI" id="CHEBI:456216"/>
        <dbReference type="EC" id="6.3.5.5"/>
    </reaction>
</comment>
<comment type="catalytic activity">
    <molecule>Carbamoyl phosphate synthase small chain</molecule>
    <reaction evidence="1">
        <text>L-glutamine + H2O = L-glutamate + NH4(+)</text>
        <dbReference type="Rhea" id="RHEA:15889"/>
        <dbReference type="ChEBI" id="CHEBI:15377"/>
        <dbReference type="ChEBI" id="CHEBI:28938"/>
        <dbReference type="ChEBI" id="CHEBI:29985"/>
        <dbReference type="ChEBI" id="CHEBI:58359"/>
    </reaction>
</comment>
<comment type="pathway">
    <text evidence="1">Amino-acid biosynthesis; L-arginine biosynthesis; carbamoyl phosphate from bicarbonate: step 1/1.</text>
</comment>
<comment type="pathway">
    <text evidence="1">Pyrimidine metabolism; UMP biosynthesis via de novo pathway; (S)-dihydroorotate from bicarbonate: step 1/3.</text>
</comment>
<comment type="subunit">
    <text evidence="1">Composed of two chains; the small (or glutamine) chain promotes the hydrolysis of glutamine to ammonia, which is used by the large (or ammonia) chain to synthesize carbamoyl phosphate. Tetramer of heterodimers (alpha,beta)4.</text>
</comment>
<comment type="similarity">
    <text evidence="1">Belongs to the CarA family.</text>
</comment>
<dbReference type="EC" id="6.3.5.5" evidence="1"/>
<dbReference type="EMBL" id="AM180252">
    <property type="protein sequence ID" value="CAJ55044.1"/>
    <property type="molecule type" value="Genomic_DNA"/>
</dbReference>
<dbReference type="RefSeq" id="WP_011527073.1">
    <property type="nucleotide sequence ID" value="NC_008011.1"/>
</dbReference>
<dbReference type="SMR" id="Q1MPN3"/>
<dbReference type="STRING" id="363253.LI0990"/>
<dbReference type="MEROPS" id="C26.A04"/>
<dbReference type="KEGG" id="lip:LI0990"/>
<dbReference type="eggNOG" id="COG0505">
    <property type="taxonomic scope" value="Bacteria"/>
</dbReference>
<dbReference type="HOGENOM" id="CLU_035901_2_1_7"/>
<dbReference type="OrthoDB" id="9804328at2"/>
<dbReference type="UniPathway" id="UPA00068">
    <property type="reaction ID" value="UER00171"/>
</dbReference>
<dbReference type="UniPathway" id="UPA00070">
    <property type="reaction ID" value="UER00115"/>
</dbReference>
<dbReference type="Proteomes" id="UP000002430">
    <property type="component" value="Chromosome"/>
</dbReference>
<dbReference type="GO" id="GO:0005524">
    <property type="term" value="F:ATP binding"/>
    <property type="evidence" value="ECO:0007669"/>
    <property type="project" value="UniProtKB-UniRule"/>
</dbReference>
<dbReference type="GO" id="GO:0004088">
    <property type="term" value="F:carbamoyl-phosphate synthase (glutamine-hydrolyzing) activity"/>
    <property type="evidence" value="ECO:0007669"/>
    <property type="project" value="UniProtKB-UniRule"/>
</dbReference>
<dbReference type="GO" id="GO:0004359">
    <property type="term" value="F:glutaminase activity"/>
    <property type="evidence" value="ECO:0007669"/>
    <property type="project" value="RHEA"/>
</dbReference>
<dbReference type="GO" id="GO:0006207">
    <property type="term" value="P:'de novo' pyrimidine nucleobase biosynthetic process"/>
    <property type="evidence" value="ECO:0007669"/>
    <property type="project" value="InterPro"/>
</dbReference>
<dbReference type="GO" id="GO:0044205">
    <property type="term" value="P:'de novo' UMP biosynthetic process"/>
    <property type="evidence" value="ECO:0007669"/>
    <property type="project" value="UniProtKB-UniRule"/>
</dbReference>
<dbReference type="GO" id="GO:0006541">
    <property type="term" value="P:glutamine metabolic process"/>
    <property type="evidence" value="ECO:0007669"/>
    <property type="project" value="InterPro"/>
</dbReference>
<dbReference type="GO" id="GO:0006526">
    <property type="term" value="P:L-arginine biosynthetic process"/>
    <property type="evidence" value="ECO:0007669"/>
    <property type="project" value="UniProtKB-UniRule"/>
</dbReference>
<dbReference type="CDD" id="cd01744">
    <property type="entry name" value="GATase1_CPSase"/>
    <property type="match status" value="1"/>
</dbReference>
<dbReference type="FunFam" id="3.50.30.20:FF:000001">
    <property type="entry name" value="Carbamoyl-phosphate synthase small chain"/>
    <property type="match status" value="1"/>
</dbReference>
<dbReference type="Gene3D" id="3.40.50.880">
    <property type="match status" value="1"/>
</dbReference>
<dbReference type="Gene3D" id="3.50.30.20">
    <property type="entry name" value="Carbamoyl-phosphate synthase small subunit, N-terminal domain"/>
    <property type="match status" value="1"/>
</dbReference>
<dbReference type="HAMAP" id="MF_01209">
    <property type="entry name" value="CPSase_S_chain"/>
    <property type="match status" value="1"/>
</dbReference>
<dbReference type="InterPro" id="IPR050472">
    <property type="entry name" value="Anth_synth/Amidotransfase"/>
</dbReference>
<dbReference type="InterPro" id="IPR006274">
    <property type="entry name" value="CarbamoylP_synth_ssu"/>
</dbReference>
<dbReference type="InterPro" id="IPR002474">
    <property type="entry name" value="CarbamoylP_synth_ssu_N"/>
</dbReference>
<dbReference type="InterPro" id="IPR036480">
    <property type="entry name" value="CarbP_synth_ssu_N_sf"/>
</dbReference>
<dbReference type="InterPro" id="IPR029062">
    <property type="entry name" value="Class_I_gatase-like"/>
</dbReference>
<dbReference type="InterPro" id="IPR035686">
    <property type="entry name" value="CPSase_GATase1"/>
</dbReference>
<dbReference type="InterPro" id="IPR017926">
    <property type="entry name" value="GATASE"/>
</dbReference>
<dbReference type="NCBIfam" id="TIGR01368">
    <property type="entry name" value="CPSaseIIsmall"/>
    <property type="match status" value="1"/>
</dbReference>
<dbReference type="NCBIfam" id="NF009475">
    <property type="entry name" value="PRK12838.1"/>
    <property type="match status" value="1"/>
</dbReference>
<dbReference type="PANTHER" id="PTHR43418:SF7">
    <property type="entry name" value="CARBAMOYL-PHOSPHATE SYNTHASE SMALL CHAIN"/>
    <property type="match status" value="1"/>
</dbReference>
<dbReference type="PANTHER" id="PTHR43418">
    <property type="entry name" value="MULTIFUNCTIONAL TRYPTOPHAN BIOSYNTHESIS PROTEIN-RELATED"/>
    <property type="match status" value="1"/>
</dbReference>
<dbReference type="Pfam" id="PF00988">
    <property type="entry name" value="CPSase_sm_chain"/>
    <property type="match status" value="1"/>
</dbReference>
<dbReference type="Pfam" id="PF00117">
    <property type="entry name" value="GATase"/>
    <property type="match status" value="1"/>
</dbReference>
<dbReference type="PRINTS" id="PR00097">
    <property type="entry name" value="ANTSNTHASEII"/>
</dbReference>
<dbReference type="PRINTS" id="PR00099">
    <property type="entry name" value="CPSGATASE"/>
</dbReference>
<dbReference type="PRINTS" id="PR00096">
    <property type="entry name" value="GATASE"/>
</dbReference>
<dbReference type="SMART" id="SM01097">
    <property type="entry name" value="CPSase_sm_chain"/>
    <property type="match status" value="1"/>
</dbReference>
<dbReference type="SUPFAM" id="SSF52021">
    <property type="entry name" value="Carbamoyl phosphate synthetase, small subunit N-terminal domain"/>
    <property type="match status" value="1"/>
</dbReference>
<dbReference type="SUPFAM" id="SSF52317">
    <property type="entry name" value="Class I glutamine amidotransferase-like"/>
    <property type="match status" value="1"/>
</dbReference>
<dbReference type="PROSITE" id="PS51273">
    <property type="entry name" value="GATASE_TYPE_1"/>
    <property type="match status" value="1"/>
</dbReference>
<keyword id="KW-0028">Amino-acid biosynthesis</keyword>
<keyword id="KW-0055">Arginine biosynthesis</keyword>
<keyword id="KW-0067">ATP-binding</keyword>
<keyword id="KW-0315">Glutamine amidotransferase</keyword>
<keyword id="KW-0436">Ligase</keyword>
<keyword id="KW-0547">Nucleotide-binding</keyword>
<keyword id="KW-0665">Pyrimidine biosynthesis</keyword>
<keyword id="KW-1185">Reference proteome</keyword>
<evidence type="ECO:0000255" key="1">
    <source>
        <dbReference type="HAMAP-Rule" id="MF_01209"/>
    </source>
</evidence>
<accession>Q1MPN3</accession>
<organism>
    <name type="scientific">Lawsonia intracellularis (strain PHE/MN1-00)</name>
    <dbReference type="NCBI Taxonomy" id="363253"/>
    <lineage>
        <taxon>Bacteria</taxon>
        <taxon>Pseudomonadati</taxon>
        <taxon>Thermodesulfobacteriota</taxon>
        <taxon>Desulfovibrionia</taxon>
        <taxon>Desulfovibrionales</taxon>
        <taxon>Desulfovibrionaceae</taxon>
        <taxon>Lawsonia</taxon>
    </lineage>
</organism>
<protein>
    <recommendedName>
        <fullName evidence="1">Carbamoyl phosphate synthase small chain</fullName>
        <ecNumber evidence="1">6.3.5.5</ecNumber>
    </recommendedName>
    <alternativeName>
        <fullName evidence="1">Carbamoyl phosphate synthetase glutamine chain</fullName>
    </alternativeName>
</protein>
<sequence length="376" mass="41736">MKALLALEDGFILEGQSINGHCESSGEVIFNTGMTGYQEILTDPSYYGQMVCMTWPLIGNYGINKEDMESEKIHVSALIVKECCRNPSNWRSETSLPKFLQEYNIAGIEGIDTRALTRHIRINGAMRGIISTSITDPNDLILRVKKVPSMEGQNYVTKVAPNSPWVLYGQCVVPADIKEDGSFLWKQNKIPLIVYDYGIKWNIIRLLEGAGFDPLMVPPLFSLEQVKASGAKAIFLSNGPGDPGTLIDEIQIIRELMEYYPIAGICLGHQLLGHAVGGTTRKLTFGHHGSNHPIKNLATGHIEISSQNHGFCVNFESNNDIEVTHINLNDNTLEGFIHKTKPILAVQHHPEASPGPMDSQYFFTRFKEVVLLKLGC</sequence>
<name>CARA_LAWIP</name>
<feature type="chain" id="PRO_1000138863" description="Carbamoyl phosphate synthase small chain">
    <location>
        <begin position="1"/>
        <end position="376"/>
    </location>
</feature>
<feature type="domain" description="Glutamine amidotransferase type-1" evidence="1">
    <location>
        <begin position="189"/>
        <end position="376"/>
    </location>
</feature>
<feature type="region of interest" description="CPSase" evidence="1">
    <location>
        <begin position="1"/>
        <end position="187"/>
    </location>
</feature>
<feature type="active site" description="Nucleophile" evidence="1">
    <location>
        <position position="266"/>
    </location>
</feature>
<feature type="active site" evidence="1">
    <location>
        <position position="349"/>
    </location>
</feature>
<feature type="active site" evidence="1">
    <location>
        <position position="351"/>
    </location>
</feature>
<feature type="binding site" evidence="1">
    <location>
        <position position="45"/>
    </location>
    <ligand>
        <name>L-glutamine</name>
        <dbReference type="ChEBI" id="CHEBI:58359"/>
    </ligand>
</feature>
<feature type="binding site" evidence="1">
    <location>
        <position position="239"/>
    </location>
    <ligand>
        <name>L-glutamine</name>
        <dbReference type="ChEBI" id="CHEBI:58359"/>
    </ligand>
</feature>
<feature type="binding site" evidence="1">
    <location>
        <position position="241"/>
    </location>
    <ligand>
        <name>L-glutamine</name>
        <dbReference type="ChEBI" id="CHEBI:58359"/>
    </ligand>
</feature>
<feature type="binding site" evidence="1">
    <location>
        <position position="267"/>
    </location>
    <ligand>
        <name>L-glutamine</name>
        <dbReference type="ChEBI" id="CHEBI:58359"/>
    </ligand>
</feature>
<feature type="binding site" evidence="1">
    <location>
        <position position="270"/>
    </location>
    <ligand>
        <name>L-glutamine</name>
        <dbReference type="ChEBI" id="CHEBI:58359"/>
    </ligand>
</feature>
<feature type="binding site" evidence="1">
    <location>
        <position position="308"/>
    </location>
    <ligand>
        <name>L-glutamine</name>
        <dbReference type="ChEBI" id="CHEBI:58359"/>
    </ligand>
</feature>
<feature type="binding site" evidence="1">
    <location>
        <position position="310"/>
    </location>
    <ligand>
        <name>L-glutamine</name>
        <dbReference type="ChEBI" id="CHEBI:58359"/>
    </ligand>
</feature>
<feature type="binding site" evidence="1">
    <location>
        <position position="311"/>
    </location>
    <ligand>
        <name>L-glutamine</name>
        <dbReference type="ChEBI" id="CHEBI:58359"/>
    </ligand>
</feature>
<reference key="1">
    <citation type="submission" date="2005-11" db="EMBL/GenBank/DDBJ databases">
        <title>The complete genome sequence of Lawsonia intracellularis: the causative agent of proliferative enteropathy.</title>
        <authorList>
            <person name="Kaur K."/>
            <person name="Zhang Q."/>
            <person name="Beckler D."/>
            <person name="Munir S."/>
            <person name="Li L."/>
            <person name="Kinsley K."/>
            <person name="Herron L."/>
            <person name="Peterson A."/>
            <person name="May B."/>
            <person name="Singh S."/>
            <person name="Gebhart C."/>
            <person name="Kapur V."/>
        </authorList>
    </citation>
    <scope>NUCLEOTIDE SEQUENCE [LARGE SCALE GENOMIC DNA]</scope>
    <source>
        <strain>PHE/MN1-00</strain>
    </source>
</reference>
<proteinExistence type="inferred from homology"/>